<feature type="chain" id="PRO_0000447676" description="Retinoblastoma-like protein 1">
    <location>
        <begin position="1"/>
        <end position="1049"/>
    </location>
</feature>
<feature type="region of interest" description="Pocket; binds T and E1A" evidence="1">
    <location>
        <begin position="385"/>
        <end position="944"/>
    </location>
</feature>
<feature type="region of interest" description="Domain A" evidence="4">
    <location>
        <begin position="385"/>
        <end position="584"/>
    </location>
</feature>
<feature type="region of interest" description="Spacer" evidence="4">
    <location>
        <begin position="585"/>
        <end position="779"/>
    </location>
</feature>
<feature type="region of interest" description="Domain B" evidence="4">
    <location>
        <begin position="780"/>
        <end position="944"/>
    </location>
</feature>
<feature type="modified residue" description="Phosphothreonine" evidence="1">
    <location>
        <position position="332"/>
    </location>
</feature>
<feature type="modified residue" description="Phosphothreonine" evidence="1">
    <location>
        <position position="369"/>
    </location>
</feature>
<feature type="modified residue" description="Phosphothreonine" evidence="1">
    <location>
        <position position="385"/>
    </location>
</feature>
<feature type="modified residue" description="Phosphoserine" evidence="1">
    <location>
        <position position="640"/>
    </location>
</feature>
<feature type="modified residue" description="Phosphoserine" evidence="1">
    <location>
        <position position="650"/>
    </location>
</feature>
<feature type="modified residue" description="Phosphoserine" evidence="1">
    <location>
        <position position="748"/>
    </location>
</feature>
<feature type="modified residue" description="Phosphoserine" evidence="1">
    <location>
        <position position="761"/>
    </location>
</feature>
<feature type="modified residue" description="Phosphoserine" evidence="1">
    <location>
        <position position="959"/>
    </location>
</feature>
<feature type="modified residue" description="Phosphoserine" evidence="1">
    <location>
        <position position="970"/>
    </location>
</feature>
<feature type="modified residue" description="Phosphoserine" evidence="1">
    <location>
        <position position="983"/>
    </location>
</feature>
<feature type="modified residue" description="Phosphothreonine" evidence="1">
    <location>
        <position position="992"/>
    </location>
</feature>
<feature type="modified residue" description="Phosphoserine" evidence="1">
    <location>
        <position position="1004"/>
    </location>
</feature>
<feature type="modified residue" description="Phosphoserine" evidence="1">
    <location>
        <position position="1022"/>
    </location>
</feature>
<sequence length="1049" mass="117818">MFEDEPHAEGAAAVAAAREALQALCQELNLDEGSAAEALDDFTAIRGNYSLEGEVIHWLACSLYVACRKSIIPTVGKGVMEGNCVSLTRILRSAKLSLIQFFSKMKKWMDMSNLPQEFRERIERLERNFEVSTVIFKKFEPIFLDIFQNPYEELPKLPRSRKQRRIPCSVKDLFNFCWTLFVYTKGNFRMIGDDLVNSYHLLLCCLDLIFANAIMCPNRRDLLNPSFKGLPSDFHAVNFKAAEEPPCIIAVLCDLHDGLLVEAKGIKEHYFKPYISKLFDKKILKGECLLDLSSFTDNSKAVNKEYEEYVLTVGDFDERIFLGADAEEEIGTPRKFAADTQFGKLTSQASVDCNLQQHFEKKRSFAPSTPLTGRRYLQEKEAVTTPVASATQSVSRLQSIVAGLKSAPSEQLLTIFESCMRNPMGNIVKIVKGIGETFCQHYTQSTDKQPGSHIDFAVNRLKLAEILYYKILETIMVQETRRLHGMDMSVLLEQDIFHRSLLACCLEIVLFAYSSPRTFPWIIDVLGLQPFYFYKVIEVVIRSEEGLSRDMVKHLNSIEEQILESLAWTNNSALWEALRASANKVPSCEEVIFPNNFEIGNGGSVQGHLPMMPMSPIIHPRVKEVRTDSGSLRKDMQPLSPISVHERYSSPAAGSAKRRLFGDDPPKETLMEKIMAEGTQLKIAPSSVTAESLSISPGQALLTMATTTVTGTTGRKVTVPLHGIANDAGEITLVPISMNTTQDSTAESLVSLTAQSLIGASPKQTHLTKTQDAPLTGISKPKRTGSLALFYRKVYHLASVRLRDLCLKLDVSNELRRKIWTCFEFTLVHCPDLMKDRHLDQLLLCAFYIMAKVTKEERTFQEIMKSYRNQPQANSHVYRSVLLKSIPGEVVAYNGDYEMTDGDIEDATKTPNCSSEPVKEERGDLIKFYNAIYVGRVKSFALKYDLSNQDHIMDAPPLSPFPHIKQQPGSPRRISQQHSIYVSPHKNASGLTPRSALLYKFNGSPSKKAKKRVIAISGDAESPAKRLCQENDDVLLKRLQDVVSERANH</sequence>
<name>RBL1_RAT</name>
<evidence type="ECO:0000250" key="1">
    <source>
        <dbReference type="UniProtKB" id="P28749"/>
    </source>
</evidence>
<evidence type="ECO:0000250" key="2">
    <source>
        <dbReference type="UniProtKB" id="Q64701"/>
    </source>
</evidence>
<evidence type="ECO:0000269" key="3">
    <source>
    </source>
</evidence>
<evidence type="ECO:0000305" key="4"/>
<evidence type="ECO:0000312" key="5">
    <source>
        <dbReference type="Proteomes" id="UP000002494"/>
    </source>
</evidence>
<evidence type="ECO:0000312" key="6">
    <source>
        <dbReference type="RGD" id="1595511"/>
    </source>
</evidence>
<evidence type="ECO:0007744" key="7">
    <source>
    </source>
</evidence>
<protein>
    <recommendedName>
        <fullName evidence="4">Retinoblastoma-like protein 1</fullName>
    </recommendedName>
    <alternativeName>
        <fullName evidence="4">107 kDa retinoblastoma-associated protein</fullName>
        <shortName evidence="4">p107</shortName>
    </alternativeName>
    <alternativeName>
        <fullName evidence="4">pRb1</fullName>
    </alternativeName>
</protein>
<keyword id="KW-0131">Cell cycle</keyword>
<keyword id="KW-0156">Chromatin regulator</keyword>
<keyword id="KW-0539">Nucleus</keyword>
<keyword id="KW-0597">Phosphoprotein</keyword>
<keyword id="KW-1185">Reference proteome</keyword>
<keyword id="KW-0678">Repressor</keyword>
<keyword id="KW-0804">Transcription</keyword>
<keyword id="KW-0805">Transcription regulation</keyword>
<keyword id="KW-0043">Tumor suppressor</keyword>
<gene>
    <name evidence="6" type="primary">Rbl1</name>
</gene>
<dbReference type="EMBL" id="AABR07054428">
    <property type="status" value="NOT_ANNOTATED_CDS"/>
    <property type="molecule type" value="Genomic_DNA"/>
</dbReference>
<dbReference type="EMBL" id="AABR07054429">
    <property type="status" value="NOT_ANNOTATED_CDS"/>
    <property type="molecule type" value="Genomic_DNA"/>
</dbReference>
<dbReference type="RefSeq" id="NP_001177995.1">
    <property type="nucleotide sequence ID" value="NM_001191066.1"/>
</dbReference>
<dbReference type="SMR" id="D3ZS28"/>
<dbReference type="FunCoup" id="D3ZS28">
    <property type="interactions" value="3360"/>
</dbReference>
<dbReference type="MINT" id="D3ZS28"/>
<dbReference type="STRING" id="10116.ENSRNOP00000063017"/>
<dbReference type="iPTMnet" id="D3ZS28"/>
<dbReference type="PhosphoSitePlus" id="D3ZS28"/>
<dbReference type="PaxDb" id="10116-ENSRNOP00000063017"/>
<dbReference type="GeneID" id="680111"/>
<dbReference type="KEGG" id="rno:680111"/>
<dbReference type="AGR" id="RGD:1595511"/>
<dbReference type="CTD" id="5933"/>
<dbReference type="RGD" id="1595511">
    <property type="gene designation" value="Rbl1"/>
</dbReference>
<dbReference type="eggNOG" id="KOG1010">
    <property type="taxonomic scope" value="Eukaryota"/>
</dbReference>
<dbReference type="HOGENOM" id="CLU_008943_0_1_1"/>
<dbReference type="InParanoid" id="D3ZS28"/>
<dbReference type="TreeFam" id="TF105568"/>
<dbReference type="Reactome" id="R-RNO-1538133">
    <property type="pathway name" value="G0 and Early G1"/>
</dbReference>
<dbReference type="Reactome" id="R-RNO-2173796">
    <property type="pathway name" value="SMAD2/SMAD3:SMAD4 heterotrimer regulates transcription"/>
</dbReference>
<dbReference type="Reactome" id="R-RNO-69231">
    <property type="pathway name" value="Cyclin D associated events in G1"/>
</dbReference>
<dbReference type="PRO" id="PR:D3ZS28"/>
<dbReference type="Proteomes" id="UP000002494">
    <property type="component" value="Unplaced"/>
</dbReference>
<dbReference type="GO" id="GO:0000785">
    <property type="term" value="C:chromatin"/>
    <property type="evidence" value="ECO:0000318"/>
    <property type="project" value="GO_Central"/>
</dbReference>
<dbReference type="GO" id="GO:0005654">
    <property type="term" value="C:nucleoplasm"/>
    <property type="evidence" value="ECO:0000266"/>
    <property type="project" value="RGD"/>
</dbReference>
<dbReference type="GO" id="GO:0005634">
    <property type="term" value="C:nucleus"/>
    <property type="evidence" value="ECO:0000266"/>
    <property type="project" value="RGD"/>
</dbReference>
<dbReference type="GO" id="GO:0005667">
    <property type="term" value="C:transcription regulator complex"/>
    <property type="evidence" value="ECO:0000266"/>
    <property type="project" value="RGD"/>
</dbReference>
<dbReference type="GO" id="GO:1990841">
    <property type="term" value="F:promoter-specific chromatin binding"/>
    <property type="evidence" value="ECO:0000266"/>
    <property type="project" value="RGD"/>
</dbReference>
<dbReference type="GO" id="GO:0000977">
    <property type="term" value="F:RNA polymerase II transcription regulatory region sequence-specific DNA binding"/>
    <property type="evidence" value="ECO:0000318"/>
    <property type="project" value="GO_Central"/>
</dbReference>
<dbReference type="GO" id="GO:0030154">
    <property type="term" value="P:cell differentiation"/>
    <property type="evidence" value="ECO:0000318"/>
    <property type="project" value="GO_Central"/>
</dbReference>
<dbReference type="GO" id="GO:0006325">
    <property type="term" value="P:chromatin organization"/>
    <property type="evidence" value="ECO:0007669"/>
    <property type="project" value="UniProtKB-KW"/>
</dbReference>
<dbReference type="GO" id="GO:2000773">
    <property type="term" value="P:negative regulation of cellular senescence"/>
    <property type="evidence" value="ECO:0000266"/>
    <property type="project" value="RGD"/>
</dbReference>
<dbReference type="GO" id="GO:2000134">
    <property type="term" value="P:negative regulation of G1/S transition of mitotic cell cycle"/>
    <property type="evidence" value="ECO:0000318"/>
    <property type="project" value="GO_Central"/>
</dbReference>
<dbReference type="GO" id="GO:0010629">
    <property type="term" value="P:negative regulation of gene expression"/>
    <property type="evidence" value="ECO:0000266"/>
    <property type="project" value="RGD"/>
</dbReference>
<dbReference type="GO" id="GO:0000122">
    <property type="term" value="P:negative regulation of transcription by RNA polymerase II"/>
    <property type="evidence" value="ECO:0000266"/>
    <property type="project" value="RGD"/>
</dbReference>
<dbReference type="CDD" id="cd20605">
    <property type="entry name" value="CYCLIN_RBL1"/>
    <property type="match status" value="1"/>
</dbReference>
<dbReference type="FunFam" id="1.10.472.10:FF:000035">
    <property type="entry name" value="RB transcriptional corepressor-like 1"/>
    <property type="match status" value="1"/>
</dbReference>
<dbReference type="FunFam" id="1.10.472.140:FF:000001">
    <property type="entry name" value="Retinoblastoma-like 2, isoform CRA_a"/>
    <property type="match status" value="1"/>
</dbReference>
<dbReference type="FunFam" id="1.10.472.10:FF:000082">
    <property type="entry name" value="retinoblastoma-like protein 1 isoform X1"/>
    <property type="match status" value="1"/>
</dbReference>
<dbReference type="Gene3D" id="1.10.472.140">
    <property type="match status" value="1"/>
</dbReference>
<dbReference type="Gene3D" id="1.10.472.10">
    <property type="entry name" value="Cyclin-like"/>
    <property type="match status" value="3"/>
</dbReference>
<dbReference type="InterPro" id="IPR013763">
    <property type="entry name" value="Cyclin-like_dom"/>
</dbReference>
<dbReference type="InterPro" id="IPR036915">
    <property type="entry name" value="Cyclin-like_sf"/>
</dbReference>
<dbReference type="InterPro" id="IPR002720">
    <property type="entry name" value="RB_A"/>
</dbReference>
<dbReference type="InterPro" id="IPR002719">
    <property type="entry name" value="RB_B"/>
</dbReference>
<dbReference type="InterPro" id="IPR015030">
    <property type="entry name" value="RB_C"/>
</dbReference>
<dbReference type="InterPro" id="IPR028309">
    <property type="entry name" value="RB_fam"/>
</dbReference>
<dbReference type="InterPro" id="IPR024599">
    <property type="entry name" value="RB_N"/>
</dbReference>
<dbReference type="PANTHER" id="PTHR13742">
    <property type="entry name" value="RETINOBLASTOMA-ASSOCIATED PROTEIN RB -RELATED"/>
    <property type="match status" value="1"/>
</dbReference>
<dbReference type="PANTHER" id="PTHR13742:SF20">
    <property type="entry name" value="RETINOBLASTOMA-LIKE PROTEIN 1"/>
    <property type="match status" value="1"/>
</dbReference>
<dbReference type="Pfam" id="PF11934">
    <property type="entry name" value="DUF3452"/>
    <property type="match status" value="1"/>
</dbReference>
<dbReference type="Pfam" id="PF01858">
    <property type="entry name" value="RB_A"/>
    <property type="match status" value="1"/>
</dbReference>
<dbReference type="Pfam" id="PF01857">
    <property type="entry name" value="RB_B"/>
    <property type="match status" value="1"/>
</dbReference>
<dbReference type="SMART" id="SM00385">
    <property type="entry name" value="CYCLIN"/>
    <property type="match status" value="1"/>
</dbReference>
<dbReference type="SMART" id="SM01367">
    <property type="entry name" value="DUF3452"/>
    <property type="match status" value="1"/>
</dbReference>
<dbReference type="SMART" id="SM01368">
    <property type="entry name" value="RB_A"/>
    <property type="match status" value="1"/>
</dbReference>
<dbReference type="SMART" id="SM01369">
    <property type="entry name" value="Rb_C"/>
    <property type="match status" value="1"/>
</dbReference>
<dbReference type="SUPFAM" id="SSF47954">
    <property type="entry name" value="Cyclin-like"/>
    <property type="match status" value="2"/>
</dbReference>
<reference evidence="5" key="1">
    <citation type="journal article" date="2004" name="Nature">
        <title>Genome sequence of the Brown Norway rat yields insights into mammalian evolution.</title>
        <authorList>
            <person name="Gibbs R.A."/>
            <person name="Weinstock G.M."/>
            <person name="Metzker M.L."/>
            <person name="Muzny D.M."/>
            <person name="Sodergren E.J."/>
            <person name="Scherer S."/>
            <person name="Scott G."/>
            <person name="Steffen D."/>
            <person name="Worley K.C."/>
            <person name="Burch P.E."/>
            <person name="Okwuonu G."/>
            <person name="Hines S."/>
            <person name="Lewis L."/>
            <person name="Deramo C."/>
            <person name="Delgado O."/>
            <person name="Dugan-Rocha S."/>
            <person name="Miner G."/>
            <person name="Morgan M."/>
            <person name="Hawes A."/>
            <person name="Gill R."/>
            <person name="Holt R.A."/>
            <person name="Adams M.D."/>
            <person name="Amanatides P.G."/>
            <person name="Baden-Tillson H."/>
            <person name="Barnstead M."/>
            <person name="Chin S."/>
            <person name="Evans C.A."/>
            <person name="Ferriera S."/>
            <person name="Fosler C."/>
            <person name="Glodek A."/>
            <person name="Gu Z."/>
            <person name="Jennings D."/>
            <person name="Kraft C.L."/>
            <person name="Nguyen T."/>
            <person name="Pfannkoch C.M."/>
            <person name="Sitter C."/>
            <person name="Sutton G.G."/>
            <person name="Venter J.C."/>
            <person name="Woodage T."/>
            <person name="Smith D."/>
            <person name="Lee H.-M."/>
            <person name="Gustafson E."/>
            <person name="Cahill P."/>
            <person name="Kana A."/>
            <person name="Doucette-Stamm L."/>
            <person name="Weinstock K."/>
            <person name="Fechtel K."/>
            <person name="Weiss R.B."/>
            <person name="Dunn D.M."/>
            <person name="Green E.D."/>
            <person name="Blakesley R.W."/>
            <person name="Bouffard G.G."/>
            <person name="De Jong P.J."/>
            <person name="Osoegawa K."/>
            <person name="Zhu B."/>
            <person name="Marra M."/>
            <person name="Schein J."/>
            <person name="Bosdet I."/>
            <person name="Fjell C."/>
            <person name="Jones S."/>
            <person name="Krzywinski M."/>
            <person name="Mathewson C."/>
            <person name="Siddiqui A."/>
            <person name="Wye N."/>
            <person name="McPherson J."/>
            <person name="Zhao S."/>
            <person name="Fraser C.M."/>
            <person name="Shetty J."/>
            <person name="Shatsman S."/>
            <person name="Geer K."/>
            <person name="Chen Y."/>
            <person name="Abramzon S."/>
            <person name="Nierman W.C."/>
            <person name="Havlak P.H."/>
            <person name="Chen R."/>
            <person name="Durbin K.J."/>
            <person name="Egan A."/>
            <person name="Ren Y."/>
            <person name="Song X.-Z."/>
            <person name="Li B."/>
            <person name="Liu Y."/>
            <person name="Qin X."/>
            <person name="Cawley S."/>
            <person name="Cooney A.J."/>
            <person name="D'Souza L.M."/>
            <person name="Martin K."/>
            <person name="Wu J.Q."/>
            <person name="Gonzalez-Garay M.L."/>
            <person name="Jackson A.R."/>
            <person name="Kalafus K.J."/>
            <person name="McLeod M.P."/>
            <person name="Milosavljevic A."/>
            <person name="Virk D."/>
            <person name="Volkov A."/>
            <person name="Wheeler D.A."/>
            <person name="Zhang Z."/>
            <person name="Bailey J.A."/>
            <person name="Eichler E.E."/>
            <person name="Tuzun E."/>
            <person name="Birney E."/>
            <person name="Mongin E."/>
            <person name="Ureta-Vidal A."/>
            <person name="Woodwark C."/>
            <person name="Zdobnov E."/>
            <person name="Bork P."/>
            <person name="Suyama M."/>
            <person name="Torrents D."/>
            <person name="Alexandersson M."/>
            <person name="Trask B.J."/>
            <person name="Young J.M."/>
            <person name="Huang H."/>
            <person name="Wang H."/>
            <person name="Xing H."/>
            <person name="Daniels S."/>
            <person name="Gietzen D."/>
            <person name="Schmidt J."/>
            <person name="Stevens K."/>
            <person name="Vitt U."/>
            <person name="Wingrove J."/>
            <person name="Camara F."/>
            <person name="Mar Alba M."/>
            <person name="Abril J.F."/>
            <person name="Guigo R."/>
            <person name="Smit A."/>
            <person name="Dubchak I."/>
            <person name="Rubin E.M."/>
            <person name="Couronne O."/>
            <person name="Poliakov A."/>
            <person name="Huebner N."/>
            <person name="Ganten D."/>
            <person name="Goesele C."/>
            <person name="Hummel O."/>
            <person name="Kreitler T."/>
            <person name="Lee Y.-A."/>
            <person name="Monti J."/>
            <person name="Schulz H."/>
            <person name="Zimdahl H."/>
            <person name="Himmelbauer H."/>
            <person name="Lehrach H."/>
            <person name="Jacob H.J."/>
            <person name="Bromberg S."/>
            <person name="Gullings-Handley J."/>
            <person name="Jensen-Seaman M.I."/>
            <person name="Kwitek A.E."/>
            <person name="Lazar J."/>
            <person name="Pasko D."/>
            <person name="Tonellato P.J."/>
            <person name="Twigger S."/>
            <person name="Ponting C.P."/>
            <person name="Duarte J.M."/>
            <person name="Rice S."/>
            <person name="Goodstadt L."/>
            <person name="Beatson S.A."/>
            <person name="Emes R.D."/>
            <person name="Winter E.E."/>
            <person name="Webber C."/>
            <person name="Brandt P."/>
            <person name="Nyakatura G."/>
            <person name="Adetobi M."/>
            <person name="Chiaromonte F."/>
            <person name="Elnitski L."/>
            <person name="Eswara P."/>
            <person name="Hardison R.C."/>
            <person name="Hou M."/>
            <person name="Kolbe D."/>
            <person name="Makova K."/>
            <person name="Miller W."/>
            <person name="Nekrutenko A."/>
            <person name="Riemer C."/>
            <person name="Schwartz S."/>
            <person name="Taylor J."/>
            <person name="Yang S."/>
            <person name="Zhang Y."/>
            <person name="Lindpaintner K."/>
            <person name="Andrews T.D."/>
            <person name="Caccamo M."/>
            <person name="Clamp M."/>
            <person name="Clarke L."/>
            <person name="Curwen V."/>
            <person name="Durbin R.M."/>
            <person name="Eyras E."/>
            <person name="Searle S.M."/>
            <person name="Cooper G.M."/>
            <person name="Batzoglou S."/>
            <person name="Brudno M."/>
            <person name="Sidow A."/>
            <person name="Stone E.A."/>
            <person name="Payseur B.A."/>
            <person name="Bourque G."/>
            <person name="Lopez-Otin C."/>
            <person name="Puente X.S."/>
            <person name="Chakrabarti K."/>
            <person name="Chatterji S."/>
            <person name="Dewey C."/>
            <person name="Pachter L."/>
            <person name="Bray N."/>
            <person name="Yap V.B."/>
            <person name="Caspi A."/>
            <person name="Tesler G."/>
            <person name="Pevzner P.A."/>
            <person name="Haussler D."/>
            <person name="Roskin K.M."/>
            <person name="Baertsch R."/>
            <person name="Clawson H."/>
            <person name="Furey T.S."/>
            <person name="Hinrichs A.S."/>
            <person name="Karolchik D."/>
            <person name="Kent W.J."/>
            <person name="Rosenbloom K.R."/>
            <person name="Trumbower H."/>
            <person name="Weirauch M."/>
            <person name="Cooper D.N."/>
            <person name="Stenson P.D."/>
            <person name="Ma B."/>
            <person name="Brent M."/>
            <person name="Arumugam M."/>
            <person name="Shteynberg D."/>
            <person name="Copley R.R."/>
            <person name="Taylor M.S."/>
            <person name="Riethman H."/>
            <person name="Mudunuri U."/>
            <person name="Peterson J."/>
            <person name="Guyer M."/>
            <person name="Felsenfeld A."/>
            <person name="Old S."/>
            <person name="Mockrin S."/>
            <person name="Collins F.S."/>
        </authorList>
    </citation>
    <scope>NUCLEOTIDE SEQUENCE [LARGE SCALE GENOMIC DNA]</scope>
    <source>
        <strain evidence="5">Brown Norway</strain>
    </source>
</reference>
<reference evidence="4" key="2">
    <citation type="journal article" date="1998" name="Nat. Genet.">
        <title>A retinoblastoma-binding protein that affects cell-cycle control and confers transforming ability.</title>
        <authorList>
            <person name="Woitach J.T."/>
            <person name="Zhang M."/>
            <person name="Niu C.-H."/>
            <person name="Thorgeirsson S.S."/>
        </authorList>
    </citation>
    <scope>INTERACTION WITH RBBP9</scope>
</reference>
<reference evidence="7" key="3">
    <citation type="journal article" date="2012" name="Nat. Commun.">
        <title>Quantitative maps of protein phosphorylation sites across 14 different rat organs and tissues.</title>
        <authorList>
            <person name="Lundby A."/>
            <person name="Secher A."/>
            <person name="Lage K."/>
            <person name="Nordsborg N.B."/>
            <person name="Dmytriyev A."/>
            <person name="Lundby C."/>
            <person name="Olsen J.V."/>
        </authorList>
    </citation>
    <scope>IDENTIFICATION BY MASS SPECTROMETRY [LARGE SCALE ANALYSIS]</scope>
</reference>
<organism evidence="5">
    <name type="scientific">Rattus norvegicus</name>
    <name type="common">Rat</name>
    <dbReference type="NCBI Taxonomy" id="10116"/>
    <lineage>
        <taxon>Eukaryota</taxon>
        <taxon>Metazoa</taxon>
        <taxon>Chordata</taxon>
        <taxon>Craniata</taxon>
        <taxon>Vertebrata</taxon>
        <taxon>Euteleostomi</taxon>
        <taxon>Mammalia</taxon>
        <taxon>Eutheria</taxon>
        <taxon>Euarchontoglires</taxon>
        <taxon>Glires</taxon>
        <taxon>Rodentia</taxon>
        <taxon>Myomorpha</taxon>
        <taxon>Muroidea</taxon>
        <taxon>Muridae</taxon>
        <taxon>Murinae</taxon>
        <taxon>Rattus</taxon>
    </lineage>
</organism>
<accession>D3ZS28</accession>
<proteinExistence type="evidence at protein level"/>
<comment type="function">
    <text evidence="1 2">Key regulator of entry into cell division (By similarity). Directly involved in heterochromatin formation by maintaining overall chromatin structure and, in particular, that of constitutive heterochromatin by stabilizing histone methylation. Recruits and targets histone methyltransferases KMT5B and KMT5C, leading to epigenetic transcriptional repression. Controls histone H4 'Lys-20' trimethylation. Probably acts as a transcription repressor by recruiting chromatin-modifying enzymes to promoters (By similarity). Potent inhibitor of E2F-mediated trans-activation. May act as a tumor suppressor (By similarity).</text>
</comment>
<comment type="subunit">
    <text evidence="1 2 3">Component of the DREAM complex (also named LINC complex) at least composed of E2F4, E2F5, LIN9, LIN37, LIN52, LIN54, MYBL1, MYBL2, RBL1, RBL2, RBBP4, TFDP1 and TFDP2. The complex exists in quiescent cells where it represses cell cycle-dependent genes. It dissociates in S phase when LIN9, LIN37, LIN52 and LIN54 form a subcomplex that binds to MYBL2. Interacts with AATF. Interacts with KDM5A (By similarity). Interacts with KMT5B and KMT5C. Interacts with USP4 (By similarity). Interacts with RBBP9 (PubMed:9697699).</text>
</comment>
<comment type="subcellular location">
    <subcellularLocation>
        <location evidence="4">Nucleus</location>
    </subcellularLocation>
</comment>
<comment type="PTM">
    <text evidence="1">Cell-cycle arrest properties are inactivated by phosphorylation on Thr-332, Ser-640, Ser-959 and Ser-970 by CDK4.</text>
</comment>
<comment type="similarity">
    <text evidence="4">Belongs to the retinoblastoma protein (RB) family.</text>
</comment>